<gene>
    <name type="primary">walR</name>
    <name type="synonym">yycF</name>
    <name type="ordered locus">SACOL0019</name>
</gene>
<protein>
    <recommendedName>
        <fullName evidence="6">Transcriptional regulatory protein WalR</fullName>
    </recommendedName>
</protein>
<comment type="function">
    <text evidence="1 3">Member of the two-component regulatory system WalK/WalR that regulates genes involved in cell wall metabolism, virulence regulation, biofilm production, oxidative stress resistance and antibiotic resistance via direct or indirect regulation of autolysins (By similarity). Functions as a transcription regulator by direct binding to promoter regions (By similarity).</text>
</comment>
<comment type="subcellular location">
    <subcellularLocation>
        <location evidence="6">Cytoplasm</location>
    </subcellularLocation>
</comment>
<comment type="PTM">
    <text evidence="2 3">Phosphorylated by WalK on Asp-53 (By similarity). Phosphorylated by PknB on Thr-101 (By similarity).</text>
</comment>
<evidence type="ECO:0000250" key="1">
    <source>
        <dbReference type="UniProtKB" id="Q2G2U6"/>
    </source>
</evidence>
<evidence type="ECO:0000250" key="2">
    <source>
        <dbReference type="UniProtKB" id="Q7A8E1"/>
    </source>
</evidence>
<evidence type="ECO:0000250" key="3">
    <source>
        <dbReference type="UniProtKB" id="Q9RDT5"/>
    </source>
</evidence>
<evidence type="ECO:0000255" key="4">
    <source>
        <dbReference type="PROSITE-ProRule" id="PRU00169"/>
    </source>
</evidence>
<evidence type="ECO:0000255" key="5">
    <source>
        <dbReference type="PROSITE-ProRule" id="PRU01091"/>
    </source>
</evidence>
<evidence type="ECO:0000305" key="6"/>
<accession>Q5HJX7</accession>
<organism>
    <name type="scientific">Staphylococcus aureus (strain COL)</name>
    <dbReference type="NCBI Taxonomy" id="93062"/>
    <lineage>
        <taxon>Bacteria</taxon>
        <taxon>Bacillati</taxon>
        <taxon>Bacillota</taxon>
        <taxon>Bacilli</taxon>
        <taxon>Bacillales</taxon>
        <taxon>Staphylococcaceae</taxon>
        <taxon>Staphylococcus</taxon>
    </lineage>
</organism>
<dbReference type="EMBL" id="CP000046">
    <property type="protein sequence ID" value="AAW37407.1"/>
    <property type="molecule type" value="Genomic_DNA"/>
</dbReference>
<dbReference type="RefSeq" id="WP_000101976.1">
    <property type="nucleotide sequence ID" value="NZ_JBGOFO010000001.1"/>
</dbReference>
<dbReference type="SMR" id="Q5HJX7"/>
<dbReference type="GeneID" id="98344401"/>
<dbReference type="KEGG" id="sac:SACOL0019"/>
<dbReference type="HOGENOM" id="CLU_000445_30_4_9"/>
<dbReference type="Proteomes" id="UP000000530">
    <property type="component" value="Chromosome"/>
</dbReference>
<dbReference type="GO" id="GO:0005829">
    <property type="term" value="C:cytosol"/>
    <property type="evidence" value="ECO:0007669"/>
    <property type="project" value="TreeGrafter"/>
</dbReference>
<dbReference type="GO" id="GO:0032993">
    <property type="term" value="C:protein-DNA complex"/>
    <property type="evidence" value="ECO:0007669"/>
    <property type="project" value="TreeGrafter"/>
</dbReference>
<dbReference type="GO" id="GO:0000156">
    <property type="term" value="F:phosphorelay response regulator activity"/>
    <property type="evidence" value="ECO:0007669"/>
    <property type="project" value="TreeGrafter"/>
</dbReference>
<dbReference type="GO" id="GO:0000976">
    <property type="term" value="F:transcription cis-regulatory region binding"/>
    <property type="evidence" value="ECO:0007669"/>
    <property type="project" value="TreeGrafter"/>
</dbReference>
<dbReference type="GO" id="GO:0006355">
    <property type="term" value="P:regulation of DNA-templated transcription"/>
    <property type="evidence" value="ECO:0007669"/>
    <property type="project" value="InterPro"/>
</dbReference>
<dbReference type="CDD" id="cd17614">
    <property type="entry name" value="REC_OmpR_YycF-like"/>
    <property type="match status" value="1"/>
</dbReference>
<dbReference type="CDD" id="cd00383">
    <property type="entry name" value="trans_reg_C"/>
    <property type="match status" value="1"/>
</dbReference>
<dbReference type="FunFam" id="1.10.10.10:FF:000089">
    <property type="entry name" value="Alkaline phosphatase synthesis response regulator"/>
    <property type="match status" value="1"/>
</dbReference>
<dbReference type="FunFam" id="3.40.50.2300:FF:000052">
    <property type="entry name" value="DNA-binding response regulator YycF"/>
    <property type="match status" value="1"/>
</dbReference>
<dbReference type="Gene3D" id="3.40.50.2300">
    <property type="match status" value="1"/>
</dbReference>
<dbReference type="Gene3D" id="6.10.250.690">
    <property type="match status" value="1"/>
</dbReference>
<dbReference type="Gene3D" id="1.10.10.10">
    <property type="entry name" value="Winged helix-like DNA-binding domain superfamily/Winged helix DNA-binding domain"/>
    <property type="match status" value="1"/>
</dbReference>
<dbReference type="InterPro" id="IPR011006">
    <property type="entry name" value="CheY-like_superfamily"/>
</dbReference>
<dbReference type="InterPro" id="IPR001867">
    <property type="entry name" value="OmpR/PhoB-type_DNA-bd"/>
</dbReference>
<dbReference type="InterPro" id="IPR047791">
    <property type="entry name" value="Resp_reg_WalR"/>
</dbReference>
<dbReference type="InterPro" id="IPR016032">
    <property type="entry name" value="Sig_transdc_resp-reg_C-effctor"/>
</dbReference>
<dbReference type="InterPro" id="IPR001789">
    <property type="entry name" value="Sig_transdc_resp-reg_receiver"/>
</dbReference>
<dbReference type="InterPro" id="IPR039420">
    <property type="entry name" value="WalR-like"/>
</dbReference>
<dbReference type="InterPro" id="IPR036388">
    <property type="entry name" value="WH-like_DNA-bd_sf"/>
</dbReference>
<dbReference type="NCBIfam" id="NF040534">
    <property type="entry name" value="resp_reg_YycF"/>
    <property type="match status" value="1"/>
</dbReference>
<dbReference type="PANTHER" id="PTHR48111:SF40">
    <property type="entry name" value="PHOSPHATE REGULON TRANSCRIPTIONAL REGULATORY PROTEIN PHOB"/>
    <property type="match status" value="1"/>
</dbReference>
<dbReference type="PANTHER" id="PTHR48111">
    <property type="entry name" value="REGULATOR OF RPOS"/>
    <property type="match status" value="1"/>
</dbReference>
<dbReference type="Pfam" id="PF00072">
    <property type="entry name" value="Response_reg"/>
    <property type="match status" value="1"/>
</dbReference>
<dbReference type="Pfam" id="PF00486">
    <property type="entry name" value="Trans_reg_C"/>
    <property type="match status" value="1"/>
</dbReference>
<dbReference type="SMART" id="SM00448">
    <property type="entry name" value="REC"/>
    <property type="match status" value="1"/>
</dbReference>
<dbReference type="SMART" id="SM00862">
    <property type="entry name" value="Trans_reg_C"/>
    <property type="match status" value="1"/>
</dbReference>
<dbReference type="SUPFAM" id="SSF46894">
    <property type="entry name" value="C-terminal effector domain of the bipartite response regulators"/>
    <property type="match status" value="1"/>
</dbReference>
<dbReference type="SUPFAM" id="SSF52172">
    <property type="entry name" value="CheY-like"/>
    <property type="match status" value="1"/>
</dbReference>
<dbReference type="PROSITE" id="PS51755">
    <property type="entry name" value="OMPR_PHOB"/>
    <property type="match status" value="1"/>
</dbReference>
<dbReference type="PROSITE" id="PS50110">
    <property type="entry name" value="RESPONSE_REGULATORY"/>
    <property type="match status" value="1"/>
</dbReference>
<name>WALR_STAAC</name>
<sequence>MARKVVVVDDEKPIADILEFNLKKEGYDVYCAYDGNDAVDLIYEEEPDIVLLDIMLPGRDGMEVCREVRKKYEMPIIMLTAKDSEIDKVLGLELGADDYVTKPFSTRELIARVKANLRRHYSQPAQDTGNVTNEITIKDIVIYPDAYSIKKRGEDIELTHREFELFHYLSKHMGQVMTREHLLQTVWGYDYFGDVRTVDVTIRRLREKIEDDPSHPEYIVTRRGVGYFLQQHE</sequence>
<reference key="1">
    <citation type="journal article" date="2005" name="J. Bacteriol.">
        <title>Insights on evolution of virulence and resistance from the complete genome analysis of an early methicillin-resistant Staphylococcus aureus strain and a biofilm-producing methicillin-resistant Staphylococcus epidermidis strain.</title>
        <authorList>
            <person name="Gill S.R."/>
            <person name="Fouts D.E."/>
            <person name="Archer G.L."/>
            <person name="Mongodin E.F."/>
            <person name="DeBoy R.T."/>
            <person name="Ravel J."/>
            <person name="Paulsen I.T."/>
            <person name="Kolonay J.F."/>
            <person name="Brinkac L.M."/>
            <person name="Beanan M.J."/>
            <person name="Dodson R.J."/>
            <person name="Daugherty S.C."/>
            <person name="Madupu R."/>
            <person name="Angiuoli S.V."/>
            <person name="Durkin A.S."/>
            <person name="Haft D.H."/>
            <person name="Vamathevan J.J."/>
            <person name="Khouri H."/>
            <person name="Utterback T.R."/>
            <person name="Lee C."/>
            <person name="Dimitrov G."/>
            <person name="Jiang L."/>
            <person name="Qin H."/>
            <person name="Weidman J."/>
            <person name="Tran K."/>
            <person name="Kang K.H."/>
            <person name="Hance I.R."/>
            <person name="Nelson K.E."/>
            <person name="Fraser C.M."/>
        </authorList>
    </citation>
    <scope>NUCLEOTIDE SEQUENCE [LARGE SCALE GENOMIC DNA]</scope>
    <source>
        <strain>COL</strain>
    </source>
</reference>
<feature type="chain" id="PRO_0000353033" description="Transcriptional regulatory protein WalR">
    <location>
        <begin position="1"/>
        <end position="233"/>
    </location>
</feature>
<feature type="domain" description="Response regulatory" evidence="4">
    <location>
        <begin position="4"/>
        <end position="117"/>
    </location>
</feature>
<feature type="DNA-binding region" description="OmpR/PhoB-type" evidence="5">
    <location>
        <begin position="132"/>
        <end position="231"/>
    </location>
</feature>
<feature type="modified residue" description="4-aspartylphosphate" evidence="4">
    <location>
        <position position="53"/>
    </location>
</feature>
<feature type="modified residue" description="Phosphothreonine" evidence="2">
    <location>
        <position position="101"/>
    </location>
</feature>
<proteinExistence type="inferred from homology"/>
<keyword id="KW-0010">Activator</keyword>
<keyword id="KW-0963">Cytoplasm</keyword>
<keyword id="KW-0238">DNA-binding</keyword>
<keyword id="KW-0597">Phosphoprotein</keyword>
<keyword id="KW-0804">Transcription</keyword>
<keyword id="KW-0805">Transcription regulation</keyword>
<keyword id="KW-0902">Two-component regulatory system</keyword>